<proteinExistence type="inferred from homology"/>
<reference key="1">
    <citation type="submission" date="2007-10" db="EMBL/GenBank/DDBJ databases">
        <title>Genome sequence of Campylobacter concisus 13826 isolated from human feces.</title>
        <authorList>
            <person name="Fouts D.E."/>
            <person name="Mongodin E.F."/>
            <person name="Puiu D."/>
            <person name="Sebastian Y."/>
            <person name="Miller W.G."/>
            <person name="Mandrell R.E."/>
            <person name="On S."/>
            <person name="Nelson K.E."/>
        </authorList>
    </citation>
    <scope>NUCLEOTIDE SEQUENCE [LARGE SCALE GENOMIC DNA]</scope>
    <source>
        <strain>13826</strain>
    </source>
</reference>
<dbReference type="EMBL" id="CP000792">
    <property type="protein sequence ID" value="EAT99058.1"/>
    <property type="molecule type" value="Genomic_DNA"/>
</dbReference>
<dbReference type="RefSeq" id="WP_002940543.1">
    <property type="nucleotide sequence ID" value="NC_009802.2"/>
</dbReference>
<dbReference type="SMR" id="A7ZAW7"/>
<dbReference type="STRING" id="360104.CCC13826_1853"/>
<dbReference type="KEGG" id="cco:CCC13826_1853"/>
<dbReference type="eggNOG" id="COG0593">
    <property type="taxonomic scope" value="Bacteria"/>
</dbReference>
<dbReference type="HOGENOM" id="CLU_026910_3_1_7"/>
<dbReference type="OrthoDB" id="9807019at2"/>
<dbReference type="Proteomes" id="UP000001121">
    <property type="component" value="Chromosome"/>
</dbReference>
<dbReference type="GO" id="GO:0005737">
    <property type="term" value="C:cytoplasm"/>
    <property type="evidence" value="ECO:0007669"/>
    <property type="project" value="UniProtKB-SubCell"/>
</dbReference>
<dbReference type="GO" id="GO:0005886">
    <property type="term" value="C:plasma membrane"/>
    <property type="evidence" value="ECO:0007669"/>
    <property type="project" value="TreeGrafter"/>
</dbReference>
<dbReference type="GO" id="GO:0005524">
    <property type="term" value="F:ATP binding"/>
    <property type="evidence" value="ECO:0007669"/>
    <property type="project" value="UniProtKB-UniRule"/>
</dbReference>
<dbReference type="GO" id="GO:0016887">
    <property type="term" value="F:ATP hydrolysis activity"/>
    <property type="evidence" value="ECO:0007669"/>
    <property type="project" value="InterPro"/>
</dbReference>
<dbReference type="GO" id="GO:0003688">
    <property type="term" value="F:DNA replication origin binding"/>
    <property type="evidence" value="ECO:0007669"/>
    <property type="project" value="UniProtKB-UniRule"/>
</dbReference>
<dbReference type="GO" id="GO:0008289">
    <property type="term" value="F:lipid binding"/>
    <property type="evidence" value="ECO:0007669"/>
    <property type="project" value="UniProtKB-KW"/>
</dbReference>
<dbReference type="GO" id="GO:0006270">
    <property type="term" value="P:DNA replication initiation"/>
    <property type="evidence" value="ECO:0007669"/>
    <property type="project" value="UniProtKB-UniRule"/>
</dbReference>
<dbReference type="GO" id="GO:0006275">
    <property type="term" value="P:regulation of DNA replication"/>
    <property type="evidence" value="ECO:0007669"/>
    <property type="project" value="UniProtKB-UniRule"/>
</dbReference>
<dbReference type="CDD" id="cd00009">
    <property type="entry name" value="AAA"/>
    <property type="match status" value="1"/>
</dbReference>
<dbReference type="CDD" id="cd06571">
    <property type="entry name" value="Bac_DnaA_C"/>
    <property type="match status" value="1"/>
</dbReference>
<dbReference type="Gene3D" id="1.10.1750.10">
    <property type="match status" value="1"/>
</dbReference>
<dbReference type="Gene3D" id="1.10.8.60">
    <property type="match status" value="1"/>
</dbReference>
<dbReference type="Gene3D" id="3.30.300.180">
    <property type="match status" value="1"/>
</dbReference>
<dbReference type="Gene3D" id="3.40.50.300">
    <property type="entry name" value="P-loop containing nucleotide triphosphate hydrolases"/>
    <property type="match status" value="1"/>
</dbReference>
<dbReference type="HAMAP" id="MF_00377">
    <property type="entry name" value="DnaA_bact"/>
    <property type="match status" value="1"/>
</dbReference>
<dbReference type="InterPro" id="IPR003593">
    <property type="entry name" value="AAA+_ATPase"/>
</dbReference>
<dbReference type="InterPro" id="IPR001957">
    <property type="entry name" value="Chromosome_initiator_DnaA"/>
</dbReference>
<dbReference type="InterPro" id="IPR020591">
    <property type="entry name" value="Chromosome_initiator_DnaA-like"/>
</dbReference>
<dbReference type="InterPro" id="IPR018312">
    <property type="entry name" value="Chromosome_initiator_DnaA_CS"/>
</dbReference>
<dbReference type="InterPro" id="IPR013159">
    <property type="entry name" value="DnaA_C"/>
</dbReference>
<dbReference type="InterPro" id="IPR013317">
    <property type="entry name" value="DnaA_dom"/>
</dbReference>
<dbReference type="InterPro" id="IPR024633">
    <property type="entry name" value="DnaA_N_dom"/>
</dbReference>
<dbReference type="InterPro" id="IPR038454">
    <property type="entry name" value="DnaA_N_sf"/>
</dbReference>
<dbReference type="InterPro" id="IPR027417">
    <property type="entry name" value="P-loop_NTPase"/>
</dbReference>
<dbReference type="InterPro" id="IPR010921">
    <property type="entry name" value="Trp_repressor/repl_initiator"/>
</dbReference>
<dbReference type="NCBIfam" id="TIGR00362">
    <property type="entry name" value="DnaA"/>
    <property type="match status" value="1"/>
</dbReference>
<dbReference type="PANTHER" id="PTHR30050">
    <property type="entry name" value="CHROMOSOMAL REPLICATION INITIATOR PROTEIN DNAA"/>
    <property type="match status" value="1"/>
</dbReference>
<dbReference type="PANTHER" id="PTHR30050:SF2">
    <property type="entry name" value="CHROMOSOMAL REPLICATION INITIATOR PROTEIN DNAA"/>
    <property type="match status" value="1"/>
</dbReference>
<dbReference type="Pfam" id="PF00308">
    <property type="entry name" value="Bac_DnaA"/>
    <property type="match status" value="1"/>
</dbReference>
<dbReference type="Pfam" id="PF08299">
    <property type="entry name" value="Bac_DnaA_C"/>
    <property type="match status" value="1"/>
</dbReference>
<dbReference type="Pfam" id="PF11638">
    <property type="entry name" value="DnaA_N"/>
    <property type="match status" value="1"/>
</dbReference>
<dbReference type="PRINTS" id="PR00051">
    <property type="entry name" value="DNAA"/>
</dbReference>
<dbReference type="SMART" id="SM00382">
    <property type="entry name" value="AAA"/>
    <property type="match status" value="1"/>
</dbReference>
<dbReference type="SMART" id="SM00760">
    <property type="entry name" value="Bac_DnaA_C"/>
    <property type="match status" value="1"/>
</dbReference>
<dbReference type="SUPFAM" id="SSF52540">
    <property type="entry name" value="P-loop containing nucleoside triphosphate hydrolases"/>
    <property type="match status" value="1"/>
</dbReference>
<dbReference type="SUPFAM" id="SSF48295">
    <property type="entry name" value="TrpR-like"/>
    <property type="match status" value="1"/>
</dbReference>
<dbReference type="PROSITE" id="PS01008">
    <property type="entry name" value="DNAA"/>
    <property type="match status" value="1"/>
</dbReference>
<accession>A7ZAW7</accession>
<keyword id="KW-0067">ATP-binding</keyword>
<keyword id="KW-0963">Cytoplasm</keyword>
<keyword id="KW-0235">DNA replication</keyword>
<keyword id="KW-0238">DNA-binding</keyword>
<keyword id="KW-0446">Lipid-binding</keyword>
<keyword id="KW-0547">Nucleotide-binding</keyword>
<sequence>MLADEILELLQTKISANEFDCYIKQLKFNEKASNEDFIVFNATSELMAKFIKTRYAEKIAYLYEVKTGKKPEVEITSQTKLKNIKQNQVNVKQIKAQSSILNPGYTFENFVCGDSNQFAFLNAKAVADKPGVLYNPLFIYGTTGLGKTHLLQSVGNYCLDQGKVVICVTSDQFMIDFTTHLNSHSMTKFREKYRNCDVLLIDDVQFLGKTDKIQEEFFNTFNELIAKKGQIVMTSDRPAKILKGFDERLKSRFEQSIMADITPPELDTKIAIIIKKCEFDKIYLNKEVIDYIATNMGDNIREIEGAIINLNAYASLMRVEITLEFAKNTLKDLIKEKHENINLETIIEIVSKELNIKPSDIKSKSRVQNIVEARRIIIYLAKMLTTNSMPQIANYFGMKDHSAVSHNIKKINELMESNEIFNLRVTEIKNKILTKG</sequence>
<evidence type="ECO:0000255" key="1">
    <source>
        <dbReference type="HAMAP-Rule" id="MF_00377"/>
    </source>
</evidence>
<gene>
    <name evidence="1" type="primary">dnaA</name>
    <name type="ordered locus">Ccon26_00010</name>
    <name type="ORF">CCC13826_1853</name>
</gene>
<name>DNAA_CAMC1</name>
<organism>
    <name type="scientific">Campylobacter concisus (strain 13826)</name>
    <dbReference type="NCBI Taxonomy" id="360104"/>
    <lineage>
        <taxon>Bacteria</taxon>
        <taxon>Pseudomonadati</taxon>
        <taxon>Campylobacterota</taxon>
        <taxon>Epsilonproteobacteria</taxon>
        <taxon>Campylobacterales</taxon>
        <taxon>Campylobacteraceae</taxon>
        <taxon>Campylobacter</taxon>
    </lineage>
</organism>
<protein>
    <recommendedName>
        <fullName evidence="1">Chromosomal replication initiator protein DnaA</fullName>
    </recommendedName>
</protein>
<comment type="function">
    <text evidence="1">Plays an essential role in the initiation and regulation of chromosomal replication. ATP-DnaA binds to the origin of replication (oriC) to initiate formation of the DNA replication initiation complex once per cell cycle. Binds the DnaA box (a 9 base pair repeat at the origin) and separates the double-stranded (ds)DNA. Forms a right-handed helical filament on oriC DNA; dsDNA binds to the exterior of the filament while single-stranded (ss)DNA is stabiized in the filament's interior. The ATP-DnaA-oriC complex binds and stabilizes one strand of the AT-rich DNA unwinding element (DUE), permitting loading of DNA polymerase. After initiation quickly degrades to an ADP-DnaA complex that is not apt for DNA replication. Binds acidic phospholipids.</text>
</comment>
<comment type="subunit">
    <text evidence="1">Oligomerizes as a right-handed, spiral filament on DNA at oriC.</text>
</comment>
<comment type="subcellular location">
    <subcellularLocation>
        <location evidence="1">Cytoplasm</location>
    </subcellularLocation>
</comment>
<comment type="domain">
    <text evidence="1">Domain I is involved in oligomerization and binding regulators, domain II is flexibile and of varying length in different bacteria, domain III forms the AAA+ region, while domain IV binds dsDNA.</text>
</comment>
<comment type="similarity">
    <text evidence="1">Belongs to the DnaA family.</text>
</comment>
<feature type="chain" id="PRO_1000048625" description="Chromosomal replication initiator protein DnaA">
    <location>
        <begin position="1"/>
        <end position="436"/>
    </location>
</feature>
<feature type="region of interest" description="Domain I, interacts with DnaA modulators" evidence="1">
    <location>
        <begin position="1"/>
        <end position="69"/>
    </location>
</feature>
<feature type="region of interest" description="Domain II" evidence="1">
    <location>
        <begin position="69"/>
        <end position="99"/>
    </location>
</feature>
<feature type="region of interest" description="Domain III, AAA+ region" evidence="1">
    <location>
        <begin position="100"/>
        <end position="314"/>
    </location>
</feature>
<feature type="region of interest" description="Domain IV, binds dsDNA" evidence="1">
    <location>
        <begin position="315"/>
        <end position="436"/>
    </location>
</feature>
<feature type="binding site" evidence="1">
    <location>
        <position position="144"/>
    </location>
    <ligand>
        <name>ATP</name>
        <dbReference type="ChEBI" id="CHEBI:30616"/>
    </ligand>
</feature>
<feature type="binding site" evidence="1">
    <location>
        <position position="146"/>
    </location>
    <ligand>
        <name>ATP</name>
        <dbReference type="ChEBI" id="CHEBI:30616"/>
    </ligand>
</feature>
<feature type="binding site" evidence="1">
    <location>
        <position position="147"/>
    </location>
    <ligand>
        <name>ATP</name>
        <dbReference type="ChEBI" id="CHEBI:30616"/>
    </ligand>
</feature>
<feature type="binding site" evidence="1">
    <location>
        <position position="148"/>
    </location>
    <ligand>
        <name>ATP</name>
        <dbReference type="ChEBI" id="CHEBI:30616"/>
    </ligand>
</feature>